<gene>
    <name evidence="1" type="primary">trpR</name>
    <name type="ordered locus">SSPA4078</name>
</gene>
<comment type="function">
    <text evidence="1">This protein is an aporepressor. When complexed with L-tryptophan it binds the operator region of the trp operon (5'-ACTAGT-'3') and prevents the initiation of transcription. The complex also regulates trp repressor biosynthesis by binding to its regulatory region.</text>
</comment>
<comment type="subunit">
    <text evidence="1">Homodimer.</text>
</comment>
<comment type="subcellular location">
    <subcellularLocation>
        <location evidence="1">Cytoplasm</location>
    </subcellularLocation>
</comment>
<comment type="similarity">
    <text evidence="1">Belongs to the TrpR family.</text>
</comment>
<accession>B5BAK9</accession>
<proteinExistence type="inferred from homology"/>
<evidence type="ECO:0000255" key="1">
    <source>
        <dbReference type="HAMAP-Rule" id="MF_00475"/>
    </source>
</evidence>
<keyword id="KW-0963">Cytoplasm</keyword>
<keyword id="KW-0238">DNA-binding</keyword>
<keyword id="KW-0678">Repressor</keyword>
<keyword id="KW-0804">Transcription</keyword>
<keyword id="KW-0805">Transcription regulation</keyword>
<dbReference type="EMBL" id="FM200053">
    <property type="protein sequence ID" value="CAR62375.1"/>
    <property type="molecule type" value="Genomic_DNA"/>
</dbReference>
<dbReference type="RefSeq" id="WP_000192005.1">
    <property type="nucleotide sequence ID" value="NC_011147.1"/>
</dbReference>
<dbReference type="SMR" id="B5BAK9"/>
<dbReference type="KEGG" id="sek:SSPA4078"/>
<dbReference type="HOGENOM" id="CLU_147939_0_0_6"/>
<dbReference type="Proteomes" id="UP000001869">
    <property type="component" value="Chromosome"/>
</dbReference>
<dbReference type="GO" id="GO:0005737">
    <property type="term" value="C:cytoplasm"/>
    <property type="evidence" value="ECO:0007669"/>
    <property type="project" value="UniProtKB-SubCell"/>
</dbReference>
<dbReference type="GO" id="GO:0003700">
    <property type="term" value="F:DNA-binding transcription factor activity"/>
    <property type="evidence" value="ECO:0007669"/>
    <property type="project" value="InterPro"/>
</dbReference>
<dbReference type="GO" id="GO:0043565">
    <property type="term" value="F:sequence-specific DNA binding"/>
    <property type="evidence" value="ECO:0007669"/>
    <property type="project" value="InterPro"/>
</dbReference>
<dbReference type="GO" id="GO:0045892">
    <property type="term" value="P:negative regulation of DNA-templated transcription"/>
    <property type="evidence" value="ECO:0007669"/>
    <property type="project" value="UniProtKB-UniRule"/>
</dbReference>
<dbReference type="FunFam" id="1.10.1270.10:FF:000001">
    <property type="entry name" value="Trp operon repressor"/>
    <property type="match status" value="1"/>
</dbReference>
<dbReference type="Gene3D" id="1.10.1270.10">
    <property type="entry name" value="TrpR-like"/>
    <property type="match status" value="1"/>
</dbReference>
<dbReference type="HAMAP" id="MF_00475">
    <property type="entry name" value="Trp_repressor"/>
    <property type="match status" value="1"/>
</dbReference>
<dbReference type="InterPro" id="IPR000831">
    <property type="entry name" value="Trp_repress"/>
</dbReference>
<dbReference type="InterPro" id="IPR013335">
    <property type="entry name" value="Trp_repress_bac"/>
</dbReference>
<dbReference type="InterPro" id="IPR010921">
    <property type="entry name" value="Trp_repressor/repl_initiator"/>
</dbReference>
<dbReference type="InterPro" id="IPR038116">
    <property type="entry name" value="TrpR-like_sf"/>
</dbReference>
<dbReference type="NCBIfam" id="TIGR01321">
    <property type="entry name" value="TrpR"/>
    <property type="match status" value="1"/>
</dbReference>
<dbReference type="PANTHER" id="PTHR38025">
    <property type="entry name" value="TRP OPERON REPRESSOR"/>
    <property type="match status" value="1"/>
</dbReference>
<dbReference type="PANTHER" id="PTHR38025:SF1">
    <property type="entry name" value="TRP OPERON REPRESSOR"/>
    <property type="match status" value="1"/>
</dbReference>
<dbReference type="Pfam" id="PF01371">
    <property type="entry name" value="Trp_repressor"/>
    <property type="match status" value="1"/>
</dbReference>
<dbReference type="PIRSF" id="PIRSF003196">
    <property type="entry name" value="Trp_repressor"/>
    <property type="match status" value="1"/>
</dbReference>
<dbReference type="SUPFAM" id="SSF48295">
    <property type="entry name" value="TrpR-like"/>
    <property type="match status" value="1"/>
</dbReference>
<feature type="chain" id="PRO_1000197157" description="Trp operon repressor">
    <location>
        <begin position="1"/>
        <end position="108"/>
    </location>
</feature>
<feature type="DNA-binding region" evidence="1">
    <location>
        <begin position="68"/>
        <end position="91"/>
    </location>
</feature>
<reference key="1">
    <citation type="journal article" date="2009" name="BMC Genomics">
        <title>Pseudogene accumulation in the evolutionary histories of Salmonella enterica serovars Paratyphi A and Typhi.</title>
        <authorList>
            <person name="Holt K.E."/>
            <person name="Thomson N.R."/>
            <person name="Wain J."/>
            <person name="Langridge G.C."/>
            <person name="Hasan R."/>
            <person name="Bhutta Z.A."/>
            <person name="Quail M.A."/>
            <person name="Norbertczak H."/>
            <person name="Walker D."/>
            <person name="Simmonds M."/>
            <person name="White B."/>
            <person name="Bason N."/>
            <person name="Mungall K."/>
            <person name="Dougan G."/>
            <person name="Parkhill J."/>
        </authorList>
    </citation>
    <scope>NUCLEOTIDE SEQUENCE [LARGE SCALE GENOMIC DNA]</scope>
    <source>
        <strain>AKU_12601</strain>
    </source>
</reference>
<protein>
    <recommendedName>
        <fullName evidence="1">Trp operon repressor</fullName>
    </recommendedName>
</protein>
<organism>
    <name type="scientific">Salmonella paratyphi A (strain AKU_12601)</name>
    <dbReference type="NCBI Taxonomy" id="554290"/>
    <lineage>
        <taxon>Bacteria</taxon>
        <taxon>Pseudomonadati</taxon>
        <taxon>Pseudomonadota</taxon>
        <taxon>Gammaproteobacteria</taxon>
        <taxon>Enterobacterales</taxon>
        <taxon>Enterobacteriaceae</taxon>
        <taxon>Salmonella</taxon>
    </lineage>
</organism>
<name>TRPR_SALPK</name>
<sequence>MTQHSPYSSAIAEQRNQEWLRFVELLRQAYAEDLHLPLLQLMLTPDEREALGTRVRIIEELLRGEMSQRELKTELGAGIATITRGSNSLKSAPVELRHWLEQILLKSA</sequence>